<sequence length="207" mass="23624">MKWSNKDGYPWSKIIHAEKFFDKVIQNDTRPGKWEWADVVSGLRDLDKDPRMNSERRYVAIVNEDVGLGETKGIGITPGLFCGCQLIHPGEEVTSHRHNSVALYFIVEGTGELEVEGEVYSYKPFDIMTCPAWSYHAWRATGDKDTLMYVIHDMALLAYMRALFWEEPKGSENIRHMVKGSTHTWSNTKAPEVSKTQAAKELLKQGE</sequence>
<comment type="function">
    <text evidence="2 3">Dioxygenase that catalyzes the cleavage of the aromatic ring of 5-nitrosalicylate (5NSA) without prior removal of the nitro group in biodegradation of 5-nitroanthranilate.</text>
</comment>
<comment type="catalytic activity">
    <reaction evidence="2 3">
        <text>5-nitrosalicylate + O2 = 2-oxo-3-(5-oxofuran-2-ylidene)propanoate + nitrite + H(+)</text>
        <dbReference type="Rhea" id="RHEA:34227"/>
        <dbReference type="ChEBI" id="CHEBI:15378"/>
        <dbReference type="ChEBI" id="CHEBI:15379"/>
        <dbReference type="ChEBI" id="CHEBI:16301"/>
        <dbReference type="ChEBI" id="CHEBI:61268"/>
        <dbReference type="ChEBI" id="CHEBI:65081"/>
        <dbReference type="EC" id="1.13.11.64"/>
    </reaction>
</comment>
<reference key="1">
    <citation type="journal article" date="2010" name="Appl. Environ. Microbiol.">
        <title>Biodegradation of 5-Nitroanthranilic Acid by Bradyrhizobium sp. Strain JS329.</title>
        <authorList>
            <person name="Qu Y."/>
            <person name="Spain J.C."/>
        </authorList>
    </citation>
    <scope>NUCLEOTIDE SEQUENCE [GENOMIC DNA]</scope>
    <scope>FUNCTION</scope>
    <scope>CATALYTIC ACTIVITY</scope>
    <source>
        <strain>JS329</strain>
    </source>
</reference>
<reference key="2">
    <citation type="journal article" date="2011" name="J. Bacteriol.">
        <title>Molecular and biochemical characterization of the 5-nitroanthranilic acid degradation pathway in Bradyrhizobium sp. strain JS329.</title>
        <authorList>
            <person name="Qu Y."/>
            <person name="Spain J.C."/>
        </authorList>
    </citation>
    <scope>FUNCTION</scope>
    <scope>CATALYTIC ACTIVITY</scope>
    <source>
        <strain>JS329</strain>
    </source>
</reference>
<feature type="chain" id="PRO_0000418740" description="5-nitrosalicylic acid 1,2-dioxygenase">
    <location>
        <begin position="1"/>
        <end position="207"/>
    </location>
</feature>
<feature type="domain" description="Cupin type-2" evidence="1">
    <location>
        <begin position="85"/>
        <end position="151"/>
    </location>
</feature>
<feature type="strand" evidence="4">
    <location>
        <begin position="12"/>
        <end position="16"/>
    </location>
</feature>
<feature type="helix" evidence="4">
    <location>
        <begin position="17"/>
        <end position="24"/>
    </location>
</feature>
<feature type="helix" evidence="4">
    <location>
        <begin position="36"/>
        <end position="45"/>
    </location>
</feature>
<feature type="helix" evidence="4">
    <location>
        <begin position="46"/>
        <end position="48"/>
    </location>
</feature>
<feature type="helix" evidence="4">
    <location>
        <begin position="54"/>
        <end position="56"/>
    </location>
</feature>
<feature type="strand" evidence="4">
    <location>
        <begin position="58"/>
        <end position="63"/>
    </location>
</feature>
<feature type="helix" evidence="4">
    <location>
        <begin position="64"/>
        <end position="66"/>
    </location>
</feature>
<feature type="strand" evidence="4">
    <location>
        <begin position="75"/>
        <end position="79"/>
    </location>
</feature>
<feature type="strand" evidence="4">
    <location>
        <begin position="81"/>
        <end position="87"/>
    </location>
</feature>
<feature type="strand" evidence="4">
    <location>
        <begin position="92"/>
        <end position="100"/>
    </location>
</feature>
<feature type="strand" evidence="4">
    <location>
        <begin position="102"/>
        <end position="108"/>
    </location>
</feature>
<feature type="strand" evidence="4">
    <location>
        <begin position="110"/>
        <end position="115"/>
    </location>
</feature>
<feature type="strand" evidence="4">
    <location>
        <begin position="118"/>
        <end position="122"/>
    </location>
</feature>
<feature type="strand" evidence="4">
    <location>
        <begin position="127"/>
        <end position="130"/>
    </location>
</feature>
<feature type="strand" evidence="4">
    <location>
        <begin position="136"/>
        <end position="144"/>
    </location>
</feature>
<feature type="strand" evidence="4">
    <location>
        <begin position="146"/>
        <end position="152"/>
    </location>
</feature>
<feature type="helix" evidence="4">
    <location>
        <begin position="154"/>
        <end position="159"/>
    </location>
</feature>
<feature type="strand" evidence="4">
    <location>
        <begin position="164"/>
        <end position="166"/>
    </location>
</feature>
<feature type="strand" evidence="4">
    <location>
        <begin position="168"/>
        <end position="170"/>
    </location>
</feature>
<feature type="helix" evidence="4">
    <location>
        <begin position="171"/>
        <end position="173"/>
    </location>
</feature>
<feature type="strand" evidence="4">
    <location>
        <begin position="174"/>
        <end position="176"/>
    </location>
</feature>
<keyword id="KW-0002">3D-structure</keyword>
<keyword id="KW-0223">Dioxygenase</keyword>
<keyword id="KW-0560">Oxidoreductase</keyword>
<proteinExistence type="evidence at protein level"/>
<evidence type="ECO:0000255" key="1"/>
<evidence type="ECO:0000269" key="2">
    <source>
    </source>
</evidence>
<evidence type="ECO:0000269" key="3">
    <source>
    </source>
</evidence>
<evidence type="ECO:0007829" key="4">
    <source>
        <dbReference type="PDB" id="8CH4"/>
    </source>
</evidence>
<dbReference type="EC" id="1.13.11.64"/>
<dbReference type="EMBL" id="GU188569">
    <property type="protein sequence ID" value="ADC93717.1"/>
    <property type="molecule type" value="Genomic_DNA"/>
</dbReference>
<dbReference type="PDB" id="8CH4">
    <property type="method" value="X-ray"/>
    <property type="resolution" value="2.10 A"/>
    <property type="chains" value="A/B/C/D=1-207"/>
</dbReference>
<dbReference type="PDBsum" id="8CH4"/>
<dbReference type="SMR" id="D3WZ86"/>
<dbReference type="KEGG" id="ag:ADC93717"/>
<dbReference type="BioCyc" id="MetaCyc:MONOMER-17373"/>
<dbReference type="BRENDA" id="1.13.11.64">
    <property type="organism ID" value="930"/>
</dbReference>
<dbReference type="GO" id="GO:0051213">
    <property type="term" value="F:dioxygenase activity"/>
    <property type="evidence" value="ECO:0000314"/>
    <property type="project" value="CACAO"/>
</dbReference>
<dbReference type="Gene3D" id="2.60.120.10">
    <property type="entry name" value="Jelly Rolls"/>
    <property type="match status" value="1"/>
</dbReference>
<dbReference type="InterPro" id="IPR013096">
    <property type="entry name" value="Cupin_2"/>
</dbReference>
<dbReference type="InterPro" id="IPR047183">
    <property type="entry name" value="GDO-like"/>
</dbReference>
<dbReference type="InterPro" id="IPR014710">
    <property type="entry name" value="RmlC-like_jellyroll"/>
</dbReference>
<dbReference type="InterPro" id="IPR011051">
    <property type="entry name" value="RmlC_Cupin_sf"/>
</dbReference>
<dbReference type="PANTHER" id="PTHR41517">
    <property type="entry name" value="1,2-DIOXYGENASE PROTEIN-RELATED"/>
    <property type="match status" value="1"/>
</dbReference>
<dbReference type="PANTHER" id="PTHR41517:SF1">
    <property type="entry name" value="CUPIN"/>
    <property type="match status" value="1"/>
</dbReference>
<dbReference type="Pfam" id="PF07883">
    <property type="entry name" value="Cupin_2"/>
    <property type="match status" value="1"/>
</dbReference>
<dbReference type="SUPFAM" id="SSF51182">
    <property type="entry name" value="RmlC-like cupins"/>
    <property type="match status" value="1"/>
</dbReference>
<accession>D3WZ86</accession>
<gene>
    <name type="primary">naaB</name>
</gene>
<protein>
    <recommendedName>
        <fullName>5-nitrosalicylic acid 1,2-dioxygenase</fullName>
        <shortName>5NSA 1,2-dioxygenase</shortName>
        <ecNumber>1.13.11.64</ecNumber>
    </recommendedName>
    <alternativeName>
        <fullName>5-nitroanthranilic acid degradation protein B</fullName>
    </alternativeName>
</protein>
<organism>
    <name type="scientific">Bradyrhizobium sp</name>
    <dbReference type="NCBI Taxonomy" id="376"/>
    <lineage>
        <taxon>Bacteria</taxon>
        <taxon>Pseudomonadati</taxon>
        <taxon>Pseudomonadota</taxon>
        <taxon>Alphaproteobacteria</taxon>
        <taxon>Hyphomicrobiales</taxon>
        <taxon>Nitrobacteraceae</taxon>
        <taxon>Bradyrhizobium</taxon>
    </lineage>
</organism>
<name>NAAB_BRASZ</name>